<name>GLYC_MOPEI</name>
<keyword id="KW-1015">Disulfide bond</keyword>
<keyword id="KW-1170">Fusion of virus membrane with host endosomal membrane</keyword>
<keyword id="KW-1168">Fusion of virus membrane with host membrane</keyword>
<keyword id="KW-0325">Glycoprotein</keyword>
<keyword id="KW-1032">Host cell membrane</keyword>
<keyword id="KW-1038">Host endoplasmic reticulum</keyword>
<keyword id="KW-1040">Host Golgi apparatus</keyword>
<keyword id="KW-1043">Host membrane</keyword>
<keyword id="KW-0945">Host-virus interaction</keyword>
<keyword id="KW-0449">Lipoprotein</keyword>
<keyword id="KW-0472">Membrane</keyword>
<keyword id="KW-0479">Metal-binding</keyword>
<keyword id="KW-0519">Myristate</keyword>
<keyword id="KW-0812">Transmembrane</keyword>
<keyword id="KW-1133">Transmembrane helix</keyword>
<keyword id="KW-1161">Viral attachment to host cell</keyword>
<keyword id="KW-0261">Viral envelope protein</keyword>
<keyword id="KW-1162">Viral penetration into host cytoplasm</keyword>
<keyword id="KW-0946">Virion</keyword>
<keyword id="KW-1164">Virus endocytosis by host</keyword>
<keyword id="KW-1160">Virus entry into host cell</keyword>
<keyword id="KW-0862">Zinc</keyword>
<accession>P19240</accession>
<reference key="1">
    <citation type="journal article" date="1991" name="Virology">
        <title>Sequence analysis of the S RNA of the African arenavirus Mopeia: an unusual secondary structure feature in the intergenic region.</title>
        <authorList>
            <person name="Wilson S.M."/>
            <person name="Clegg J.C.S."/>
        </authorList>
    </citation>
    <scope>NUCLEOTIDE SEQUENCE [GENOMIC RNA]</scope>
    <source>
        <strain>800150</strain>
    </source>
</reference>
<evidence type="ECO:0000250" key="1">
    <source>
        <dbReference type="UniProtKB" id="P26313"/>
    </source>
</evidence>
<evidence type="ECO:0000255" key="2">
    <source>
        <dbReference type="HAMAP-Rule" id="MF_04084"/>
    </source>
</evidence>
<proteinExistence type="inferred from homology"/>
<comment type="function">
    <molecule>Stable signal peptide</molecule>
    <text evidence="2">Functions as a cleaved signal peptide that is retained as the third component of the GP complex (GP-C). Helps to stabilize the spike complex in its native conformation. The SSP is required for efficient glycoprotein expression, post-translational maturation cleavage of G1 and G2, glycoprotein transport to the cell surface plasma membrane, formation of infectious virus particles, and acid pH-dependent glycoprotein-mediated cell fusion.</text>
</comment>
<comment type="function">
    <molecule>Glycoprotein G1</molecule>
    <text evidence="2">Forms the virion spikes together with glycoprotein G2. The glycoprotein spike trimers are connected to the underlying matrix. Interacts with the host receptor leading to virus endocytosis.</text>
</comment>
<comment type="function">
    <molecule>Glycoprotein G2</molecule>
    <text evidence="2">Forms the virion spikes together with glycoprotein G1. The glycoprotein spike trimers are connected to the underlying matrix. Class I viral fusion protein that directs fusion of viral and host endosomal membranes, leading to delivery of the nucleocapsid into the cytoplasm. Membrane fusion is mediated by irreversible conformational changes induced by acidification.</text>
</comment>
<comment type="subunit">
    <molecule>Stable signal peptide</molecule>
    <text evidence="2">Interacts with glycoprotein G2. Part of the GP complex (GP-C) together with glycoprotein G1 and glycoprotein G2. The GP-complex interacts with protein Z, which interacts with ribonucleocapsid; these interactions may induce virion budding.</text>
</comment>
<comment type="subunit">
    <molecule>Glycoprotein G1</molecule>
    <text evidence="2">Homotrimer; disulfide-linked. In pre-fusion state, G1 homotrimers bind G2 homotrimers via ionic interactions. Part of the GP complex (GP-C) together with glycoprotein G2 and the stable signal peptide. The GP-complex interacts with protein Z, which interacts with ribonucleocapsid; these interactions may induce virion budding.</text>
</comment>
<comment type="subunit">
    <molecule>Glycoprotein G2</molecule>
    <text evidence="2">Homotrimer. Interacts with the stable signal peptide. In pre-fusion state, G2 homotrimers bind G1 homotrimers via ionic interactions. Part of the GP complex (GP-C) together with glycoprotein G1 and the stable signal peptide. Acidification in the endosome triggers rearrangements, which ultimately leads to a 6 helix bundle formed by the two heptad repeat domains (HR1 and HR2) in post-fusion state. The GP-complex interacts with protein Z, which interacts with ribonucleocapsid; these interactions may induce virion budding.</text>
</comment>
<comment type="subcellular location">
    <molecule>Stable signal peptide</molecule>
    <subcellularLocation>
        <location evidence="2">Virion membrane</location>
        <topology evidence="2">Single-pass type II membrane protein</topology>
    </subcellularLocation>
    <subcellularLocation>
        <location evidence="2">Host endoplasmic reticulum membrane</location>
        <topology evidence="2">Single-pass type II membrane protein</topology>
    </subcellularLocation>
    <subcellularLocation>
        <location evidence="2">Host Golgi apparatus membrane</location>
        <topology evidence="2">Single-pass type II membrane protein</topology>
    </subcellularLocation>
    <subcellularLocation>
        <location evidence="2">Host cell membrane</location>
        <topology evidence="2">Single-pass type II membrane protein</topology>
    </subcellularLocation>
</comment>
<comment type="subcellular location">
    <molecule>Glycoprotein G1</molecule>
    <subcellularLocation>
        <location evidence="2">Virion membrane</location>
        <topology evidence="2">Peripheral membrane protein</topology>
    </subcellularLocation>
    <subcellularLocation>
        <location evidence="2">Host endoplasmic reticulum membrane</location>
        <topology evidence="2">Peripheral membrane protein</topology>
    </subcellularLocation>
    <subcellularLocation>
        <location evidence="2">Host Golgi apparatus membrane</location>
        <topology evidence="2">Peripheral membrane protein</topology>
    </subcellularLocation>
    <subcellularLocation>
        <location evidence="2">Host cell membrane</location>
        <topology evidence="2">Peripheral membrane protein</topology>
    </subcellularLocation>
</comment>
<comment type="subcellular location">
    <molecule>Glycoprotein G2</molecule>
    <subcellularLocation>
        <location evidence="2">Virion membrane</location>
        <topology evidence="2">Single-pass membrane protein</topology>
    </subcellularLocation>
    <subcellularLocation>
        <location evidence="2">Host endoplasmic reticulum membrane</location>
        <topology evidence="2">Single-pass membrane protein</topology>
    </subcellularLocation>
    <subcellularLocation>
        <location evidence="2">Host Golgi apparatus membrane</location>
        <topology evidence="2">Single-pass membrane protein</topology>
    </subcellularLocation>
    <subcellularLocation>
        <location evidence="2">Host cell membrane</location>
        <topology evidence="2">Single-pass membrane protein</topology>
    </subcellularLocation>
    <text evidence="2">Binding to the stable signal peptide masks endogenous ER localization signals in the cytoplasmic domain of G2 to ensure that only the fully assembled, tripartite GP complex is transported for virion assembly.</text>
</comment>
<comment type="domain">
    <molecule>Stable signal peptide</molecule>
    <text evidence="2">The N-terminus is localized at the extracellular side of the GP-C, with a part embedded in the membrane probably.</text>
</comment>
<comment type="domain">
    <molecule>Glycoprotein G2</molecule>
    <text evidence="2">Contains 1 fusion peptide at the N-terminus, 2 heptad repeats domains HR1 and HR2 and, at the C-terminus, a cytoplasmic domain that plays a role in ER location. Also contains a zinc-binding domain that allows SSP retention in the GPC complex by accepting a cysteine from SSP as the fourth ligand.</text>
</comment>
<comment type="PTM">
    <molecule>Pre-glycoprotein polyprotein GP complex</molecule>
    <text evidence="2">Specific enzymatic cleavages in vivo yield mature proteins. GP-C polyprotein is cleaved in the endoplasmic reticulum by the host protease MBTPS1. Only cleaved glycoprotein is incorporated into virions.</text>
</comment>
<comment type="PTM">
    <molecule>Stable signal peptide</molecule>
    <text evidence="2">The SSP remains stably associated with the GP complex following cleavage by signal peptidase and plays crucial roles in the trafficking of GP through the secretory pathway.</text>
</comment>
<comment type="PTM">
    <molecule>Stable signal peptide</molecule>
    <text evidence="2">Myristoylation is necessary for GP2-mediated fusion activity.</text>
</comment>
<comment type="similarity">
    <text evidence="2">Belongs to the arenaviridae GPC protein family.</text>
</comment>
<organismHost>
    <name type="scientific">Mastomys natalensis</name>
    <name type="common">African soft-furred rat</name>
    <name type="synonym">Praomys natalensis</name>
    <dbReference type="NCBI Taxonomy" id="10112"/>
</organismHost>
<feature type="initiator methionine" description="Removed; by host" evidence="2">
    <location>
        <position position="1"/>
    </location>
</feature>
<feature type="chain" id="PRO_0000353860" description="Pre-glycoprotein polyprotein GP complex" evidence="2">
    <location>
        <begin position="2"/>
        <end position="489"/>
    </location>
</feature>
<feature type="chain" id="PRO_0000353861" description="Stable signal peptide" evidence="2">
    <location>
        <begin position="2"/>
        <end position="58"/>
    </location>
</feature>
<feature type="chain" id="PRO_0000036607" description="Glycoprotein G1" evidence="2">
    <location>
        <begin position="59"/>
        <end position="257"/>
    </location>
</feature>
<feature type="chain" id="PRO_0000036608" description="Glycoprotein G2" evidence="2">
    <location>
        <begin position="258"/>
        <end position="489"/>
    </location>
</feature>
<feature type="topological domain" description="Extracellular" evidence="2">
    <location>
        <begin position="2"/>
        <end position="17"/>
    </location>
</feature>
<feature type="transmembrane region" description="Helical" evidence="2">
    <location>
        <begin position="18"/>
        <end position="33"/>
    </location>
</feature>
<feature type="topological domain" description="Cytoplasmic" evidence="2">
    <location>
        <begin position="34"/>
        <end position="58"/>
    </location>
</feature>
<feature type="topological domain" description="Extracellular" evidence="2">
    <location>
        <begin position="59"/>
        <end position="430"/>
    </location>
</feature>
<feature type="transmembrane region" description="Helical" evidence="2">
    <location>
        <begin position="431"/>
        <end position="451"/>
    </location>
</feature>
<feature type="topological domain" description="Cytoplasmic" evidence="2">
    <location>
        <begin position="452"/>
        <end position="489"/>
    </location>
</feature>
<feature type="binding site" evidence="2">
    <location>
        <position position="57"/>
    </location>
    <ligand>
        <name>Zn(2+)</name>
        <dbReference type="ChEBI" id="CHEBI:29105"/>
        <label>1</label>
    </ligand>
</feature>
<feature type="binding site" evidence="2">
    <location>
        <position position="453"/>
    </location>
    <ligand>
        <name>Zn(2+)</name>
        <dbReference type="ChEBI" id="CHEBI:29105"/>
        <label>2</label>
    </ligand>
</feature>
<feature type="binding site" evidence="2">
    <location>
        <position position="455"/>
    </location>
    <ligand>
        <name>Zn(2+)</name>
        <dbReference type="ChEBI" id="CHEBI:29105"/>
        <label>2</label>
    </ligand>
</feature>
<feature type="binding site" evidence="2">
    <location>
        <position position="461"/>
    </location>
    <ligand>
        <name>Zn(2+)</name>
        <dbReference type="ChEBI" id="CHEBI:29105"/>
        <label>2</label>
    </ligand>
</feature>
<feature type="binding site" evidence="2">
    <location>
        <position position="465"/>
    </location>
    <ligand>
        <name>Zn(2+)</name>
        <dbReference type="ChEBI" id="CHEBI:29105"/>
        <label>1</label>
    </ligand>
</feature>
<feature type="binding site" evidence="2">
    <location>
        <position position="473"/>
    </location>
    <ligand>
        <name>Zn(2+)</name>
        <dbReference type="ChEBI" id="CHEBI:29105"/>
        <label>1</label>
    </ligand>
</feature>
<feature type="binding site" evidence="2">
    <location>
        <position position="475"/>
    </location>
    <ligand>
        <name>Zn(2+)</name>
        <dbReference type="ChEBI" id="CHEBI:29105"/>
        <label>1</label>
    </ligand>
</feature>
<feature type="site" description="Important for GP-C-mediated membrane fusion" evidence="1">
    <location>
        <position position="33"/>
    </location>
</feature>
<feature type="site" description="Cleavage; by host signal peptidase" evidence="2">
    <location>
        <begin position="58"/>
        <end position="59"/>
    </location>
</feature>
<feature type="site" description="Cleavage; by host MBTPS1" evidence="2">
    <location>
        <begin position="257"/>
        <end position="258"/>
    </location>
</feature>
<feature type="lipid moiety-binding region" description="N-myristoyl glycine; by host" evidence="2">
    <location>
        <position position="2"/>
    </location>
</feature>
<feature type="glycosylation site" description="N-linked (GlcNAc...) asparagine; by host" evidence="2">
    <location>
        <position position="78"/>
    </location>
</feature>
<feature type="glycosylation site" description="N-linked (GlcNAc...) asparagine; by host" evidence="2">
    <location>
        <position position="88"/>
    </location>
</feature>
<feature type="glycosylation site" description="N-linked (GlcNAc...) asparagine; by host" evidence="2">
    <location>
        <position position="98"/>
    </location>
</feature>
<feature type="glycosylation site" description="N-linked (GlcNAc...) asparagine; by host" evidence="2">
    <location>
        <position position="108"/>
    </location>
</feature>
<feature type="glycosylation site" description="N-linked (GlcNAc...) asparagine; by host" evidence="2">
    <location>
        <position position="118"/>
    </location>
</feature>
<feature type="glycosylation site" description="N-linked (GlcNAc...) asparagine; by host" evidence="2">
    <location>
        <position position="166"/>
    </location>
</feature>
<feature type="glycosylation site" description="N-linked (GlcNAc...) asparagine; by host" evidence="2">
    <location>
        <position position="222"/>
    </location>
</feature>
<feature type="glycosylation site" description="N-linked (GlcNAc...) asparagine; by host" evidence="2">
    <location>
        <position position="363"/>
    </location>
</feature>
<feature type="glycosylation site" description="N-linked (GlcNAc...) asparagine; by host" evidence="2">
    <location>
        <position position="371"/>
    </location>
</feature>
<feature type="glycosylation site" description="N-linked (GlcNAc...) asparagine; by host" evidence="2">
    <location>
        <position position="388"/>
    </location>
</feature>
<feature type="glycosylation site" description="N-linked (GlcNAc...) asparagine; by host" evidence="2">
    <location>
        <position position="393"/>
    </location>
</feature>
<feature type="disulfide bond" evidence="2">
    <location>
        <begin position="85"/>
        <end position="229"/>
    </location>
</feature>
<feature type="disulfide bond" evidence="2">
    <location>
        <begin position="117"/>
        <end position="154"/>
    </location>
</feature>
<feature type="disulfide bond" evidence="2">
    <location>
        <begin position="179"/>
        <end position="210"/>
    </location>
</feature>
<feature type="disulfide bond" evidence="2">
    <location>
        <begin position="277"/>
        <end position="290"/>
    </location>
</feature>
<feature type="disulfide bond" evidence="2">
    <location>
        <begin position="299"/>
        <end position="308"/>
    </location>
</feature>
<feature type="disulfide bond" evidence="2">
    <location>
        <begin position="362"/>
        <end position="383"/>
    </location>
</feature>
<organism>
    <name type="scientific">Mopeia virus</name>
    <name type="common">MOPV</name>
    <dbReference type="NCBI Taxonomy" id="3052320"/>
    <lineage>
        <taxon>Viruses</taxon>
        <taxon>Riboviria</taxon>
        <taxon>Orthornavirae</taxon>
        <taxon>Negarnaviricota</taxon>
        <taxon>Polyploviricotina</taxon>
        <taxon>Ellioviricetes</taxon>
        <taxon>Bunyavirales</taxon>
        <taxon>Arenaviridae</taxon>
        <taxon>Mammarenavirus</taxon>
    </lineage>
</organism>
<protein>
    <recommendedName>
        <fullName evidence="2">Pre-glycoprotein polyprotein GP complex</fullName>
        <shortName evidence="2">Pre-GP-C</shortName>
    </recommendedName>
    <component>
        <recommendedName>
            <fullName evidence="2">Stable signal peptide</fullName>
            <shortName evidence="2">SSP</shortName>
        </recommendedName>
    </component>
    <component>
        <recommendedName>
            <fullName evidence="2">Glycoprotein G1</fullName>
            <shortName evidence="2">GP1</shortName>
        </recommendedName>
    </component>
    <component>
        <recommendedName>
            <fullName evidence="2">Glycoprotein G2</fullName>
            <shortName evidence="2">GP2</shortName>
        </recommendedName>
    </component>
</protein>
<sequence>MGQIVTFFQEVPHILEEVMNIVLMTLSILAILKGIYNVMTCGIIGLITFLFLCGRSCSSIYKDNYEFFSLDLDMSSLNATMPLSCSKNNSHHYIQVGNETGLELTLTNTSIINHKFCNLSDAHRRNLYDKALMSILTTFHLSIPDFNQYEAMSCDFNGGKISVQYNLSHSNYVDAGNHCGTIANGIMDVFRRMYWSTSLSVASDISGTQCIQTDYKYLIIQNTSWEDHCMFSRPSPMGFLSLLSQRTRNFYISRRLLGLFTWTLSDSEGNDMPGGYCLTRSMLIGLDLKCFGNTAIAKCNQAHDEEFCDMLRLFDFNKQAISKLRSEVQQSINLINKAVNALINDQLVMRNHLRDLMGIPYCNYSKFWYLNDTRTGRTSLPKCWLVTNGSYLNETQFSTEIEQEANNMFTDMLRKEYEKRQSTTPLGLVDLFVFSTSFYLISVFLHLIKIPTHRHIKGKPCPKPHRLNHMAICSCGFYKQPGLPTQWKR</sequence>
<dbReference type="EMBL" id="M33879">
    <property type="protein sequence ID" value="AAC08700.1"/>
    <property type="molecule type" value="Genomic_RNA"/>
</dbReference>
<dbReference type="PIR" id="A38546">
    <property type="entry name" value="VGXPMV"/>
</dbReference>
<dbReference type="SMR" id="P19240"/>
<dbReference type="GlyCosmos" id="P19240">
    <property type="glycosylation" value="11 sites, No reported glycans"/>
</dbReference>
<dbReference type="GO" id="GO:0044167">
    <property type="term" value="C:host cell endoplasmic reticulum membrane"/>
    <property type="evidence" value="ECO:0007669"/>
    <property type="project" value="UniProtKB-SubCell"/>
</dbReference>
<dbReference type="GO" id="GO:0044178">
    <property type="term" value="C:host cell Golgi membrane"/>
    <property type="evidence" value="ECO:0007669"/>
    <property type="project" value="UniProtKB-SubCell"/>
</dbReference>
<dbReference type="GO" id="GO:0020002">
    <property type="term" value="C:host cell plasma membrane"/>
    <property type="evidence" value="ECO:0007669"/>
    <property type="project" value="UniProtKB-SubCell"/>
</dbReference>
<dbReference type="GO" id="GO:0016020">
    <property type="term" value="C:membrane"/>
    <property type="evidence" value="ECO:0007669"/>
    <property type="project" value="UniProtKB-UniRule"/>
</dbReference>
<dbReference type="GO" id="GO:0019031">
    <property type="term" value="C:viral envelope"/>
    <property type="evidence" value="ECO:0007669"/>
    <property type="project" value="UniProtKB-UniRule"/>
</dbReference>
<dbReference type="GO" id="GO:0055036">
    <property type="term" value="C:virion membrane"/>
    <property type="evidence" value="ECO:0007669"/>
    <property type="project" value="UniProtKB-SubCell"/>
</dbReference>
<dbReference type="GO" id="GO:0046872">
    <property type="term" value="F:metal ion binding"/>
    <property type="evidence" value="ECO:0007669"/>
    <property type="project" value="UniProtKB-KW"/>
</dbReference>
<dbReference type="GO" id="GO:0039654">
    <property type="term" value="P:fusion of virus membrane with host endosome membrane"/>
    <property type="evidence" value="ECO:0007669"/>
    <property type="project" value="UniProtKB-UniRule"/>
</dbReference>
<dbReference type="GO" id="GO:0019065">
    <property type="term" value="P:receptor-mediated endocytosis of virus by host cell"/>
    <property type="evidence" value="ECO:0007669"/>
    <property type="project" value="UniProtKB-UniRule"/>
</dbReference>
<dbReference type="GO" id="GO:0019062">
    <property type="term" value="P:virion attachment to host cell"/>
    <property type="evidence" value="ECO:0007669"/>
    <property type="project" value="UniProtKB-UniRule"/>
</dbReference>
<dbReference type="Gene3D" id="6.10.140.1590">
    <property type="match status" value="1"/>
</dbReference>
<dbReference type="Gene3D" id="2.20.28.180">
    <property type="entry name" value="Arenavirus glycoprotein, zinc binding domain"/>
    <property type="match status" value="1"/>
</dbReference>
<dbReference type="HAMAP" id="MF_04084">
    <property type="entry name" value="ARENA_GPC"/>
    <property type="match status" value="1"/>
</dbReference>
<dbReference type="InterPro" id="IPR001535">
    <property type="entry name" value="Arena_glycoprot"/>
</dbReference>
<dbReference type="InterPro" id="IPR043015">
    <property type="entry name" value="Arena_glycoprot_zinc-bd"/>
</dbReference>
<dbReference type="Pfam" id="PF00798">
    <property type="entry name" value="Arena_glycoprot"/>
    <property type="match status" value="1"/>
</dbReference>
<dbReference type="PIRSF" id="PIRSF004028">
    <property type="entry name" value="GPC_ArenaV"/>
    <property type="match status" value="1"/>
</dbReference>
<gene>
    <name evidence="2" type="primary">GPC</name>
    <name type="synonym">GP-C</name>
</gene>